<evidence type="ECO:0000255" key="1">
    <source>
        <dbReference type="HAMAP-Rule" id="MF_00176"/>
    </source>
</evidence>
<evidence type="ECO:0000305" key="2"/>
<protein>
    <recommendedName>
        <fullName evidence="1">Serine--tRNA ligase</fullName>
        <ecNumber evidence="1">6.1.1.11</ecNumber>
    </recommendedName>
    <alternativeName>
        <fullName evidence="1">Seryl-tRNA synthetase</fullName>
        <shortName evidence="1">SerRS</shortName>
    </alternativeName>
    <alternativeName>
        <fullName evidence="1">Seryl-tRNA(Ser/Sec) synthetase</fullName>
    </alternativeName>
</protein>
<proteinExistence type="inferred from homology"/>
<feature type="chain" id="PRO_0000121993" description="Serine--tRNA ligase">
    <location>
        <begin position="1"/>
        <end position="429"/>
    </location>
</feature>
<feature type="binding site" evidence="1">
    <location>
        <begin position="228"/>
        <end position="230"/>
    </location>
    <ligand>
        <name>L-serine</name>
        <dbReference type="ChEBI" id="CHEBI:33384"/>
    </ligand>
</feature>
<feature type="binding site" evidence="1">
    <location>
        <begin position="259"/>
        <end position="261"/>
    </location>
    <ligand>
        <name>ATP</name>
        <dbReference type="ChEBI" id="CHEBI:30616"/>
    </ligand>
</feature>
<feature type="binding site" evidence="1">
    <location>
        <position position="282"/>
    </location>
    <ligand>
        <name>L-serine</name>
        <dbReference type="ChEBI" id="CHEBI:33384"/>
    </ligand>
</feature>
<feature type="binding site" evidence="1">
    <location>
        <begin position="346"/>
        <end position="349"/>
    </location>
    <ligand>
        <name>ATP</name>
        <dbReference type="ChEBI" id="CHEBI:30616"/>
    </ligand>
</feature>
<feature type="binding site" evidence="1">
    <location>
        <position position="384"/>
    </location>
    <ligand>
        <name>L-serine</name>
        <dbReference type="ChEBI" id="CHEBI:33384"/>
    </ligand>
</feature>
<sequence length="429" mass="48312">MHDIELIKKDPELFDRAMISRGFGEQAEKIIELDLKKRGELSTLYSLREQRNAVTREVALLKRSGIECTPQIEASKKLAEEIATLEHSIKEDTKLSNLLESLPNVPDPIVPVGKDESHNVEVRSHGQRRDFAFGIRPHYELGEMLNLLDFKRAAVLSGARFSILKGQLAELERALASFMLDMHTKEFGYTEISHPVLVNERTMYNVGQLPKFHDDSFRTTNNFRLAPTSEVALANLVSGTTLPRDSLPMRFTAYSQCFRAEAGSAGLDTRGMMRQHQFGKVELVSITTSDASNAELERMTSIAEEVLKRLELPYRVMLLCSGDMGFSASISYDLEVWMPAQDKYREISSCSNCRDFQARRMGAKYFFFENKKKHSTLVHTLNGSALAIGRTIAAIMENYQNEDGSITIPDVLRKYTGASAIMRAEDALP</sequence>
<keyword id="KW-0030">Aminoacyl-tRNA synthetase</keyword>
<keyword id="KW-0067">ATP-binding</keyword>
<keyword id="KW-0963">Cytoplasm</keyword>
<keyword id="KW-0436">Ligase</keyword>
<keyword id="KW-0547">Nucleotide-binding</keyword>
<keyword id="KW-0648">Protein biosynthesis</keyword>
<comment type="function">
    <text evidence="1">Catalyzes the attachment of serine to tRNA(Ser). Is also able to aminoacylate tRNA(Sec) with serine, to form the misacylated tRNA L-seryl-tRNA(Sec), which will be further converted into selenocysteinyl-tRNA(Sec).</text>
</comment>
<comment type="catalytic activity">
    <reaction evidence="1">
        <text>tRNA(Ser) + L-serine + ATP = L-seryl-tRNA(Ser) + AMP + diphosphate + H(+)</text>
        <dbReference type="Rhea" id="RHEA:12292"/>
        <dbReference type="Rhea" id="RHEA-COMP:9669"/>
        <dbReference type="Rhea" id="RHEA-COMP:9703"/>
        <dbReference type="ChEBI" id="CHEBI:15378"/>
        <dbReference type="ChEBI" id="CHEBI:30616"/>
        <dbReference type="ChEBI" id="CHEBI:33019"/>
        <dbReference type="ChEBI" id="CHEBI:33384"/>
        <dbReference type="ChEBI" id="CHEBI:78442"/>
        <dbReference type="ChEBI" id="CHEBI:78533"/>
        <dbReference type="ChEBI" id="CHEBI:456215"/>
        <dbReference type="EC" id="6.1.1.11"/>
    </reaction>
</comment>
<comment type="catalytic activity">
    <reaction evidence="1">
        <text>tRNA(Sec) + L-serine + ATP = L-seryl-tRNA(Sec) + AMP + diphosphate + H(+)</text>
        <dbReference type="Rhea" id="RHEA:42580"/>
        <dbReference type="Rhea" id="RHEA-COMP:9742"/>
        <dbReference type="Rhea" id="RHEA-COMP:10128"/>
        <dbReference type="ChEBI" id="CHEBI:15378"/>
        <dbReference type="ChEBI" id="CHEBI:30616"/>
        <dbReference type="ChEBI" id="CHEBI:33019"/>
        <dbReference type="ChEBI" id="CHEBI:33384"/>
        <dbReference type="ChEBI" id="CHEBI:78442"/>
        <dbReference type="ChEBI" id="CHEBI:78533"/>
        <dbReference type="ChEBI" id="CHEBI:456215"/>
        <dbReference type="EC" id="6.1.1.11"/>
    </reaction>
</comment>
<comment type="pathway">
    <text evidence="1">Aminoacyl-tRNA biosynthesis; selenocysteinyl-tRNA(Sec) biosynthesis; L-seryl-tRNA(Sec) from L-serine and tRNA(Sec): step 1/1.</text>
</comment>
<comment type="subunit">
    <text evidence="1">Homodimer. The tRNA molecule binds across the dimer.</text>
</comment>
<comment type="subcellular location">
    <subcellularLocation>
        <location evidence="1">Cytoplasm</location>
    </subcellularLocation>
</comment>
<comment type="domain">
    <text evidence="1">Consists of two distinct domains, a catalytic core and a N-terminal extension that is involved in tRNA binding.</text>
</comment>
<comment type="similarity">
    <text evidence="1">Belongs to the class-II aminoacyl-tRNA synthetase family. Type-1 seryl-tRNA synthetase subfamily.</text>
</comment>
<comment type="sequence caution" evidence="2">
    <conflict type="erroneous initiation">
        <sequence resource="EMBL-CDS" id="AAV86703"/>
    </conflict>
</comment>
<reference key="1">
    <citation type="journal article" date="2005" name="Proc. Natl. Acad. Sci. U.S.A.">
        <title>Complete genome sequencing of Anaplasma marginale reveals that the surface is skewed to two superfamilies of outer membrane proteins.</title>
        <authorList>
            <person name="Brayton K.A."/>
            <person name="Kappmeyer L.S."/>
            <person name="Herndon D.R."/>
            <person name="Dark M.J."/>
            <person name="Tibbals D.L."/>
            <person name="Palmer G.H."/>
            <person name="McGuire T.C."/>
            <person name="Knowles D.P. Jr."/>
        </authorList>
    </citation>
    <scope>NUCLEOTIDE SEQUENCE [LARGE SCALE GENOMIC DNA]</scope>
    <source>
        <strain>St. Maries</strain>
    </source>
</reference>
<gene>
    <name evidence="1" type="primary">serS</name>
    <name type="ordered locus">AM759</name>
</gene>
<accession>Q5PAH7</accession>
<organism>
    <name type="scientific">Anaplasma marginale (strain St. Maries)</name>
    <dbReference type="NCBI Taxonomy" id="234826"/>
    <lineage>
        <taxon>Bacteria</taxon>
        <taxon>Pseudomonadati</taxon>
        <taxon>Pseudomonadota</taxon>
        <taxon>Alphaproteobacteria</taxon>
        <taxon>Rickettsiales</taxon>
        <taxon>Anaplasmataceae</taxon>
        <taxon>Anaplasma</taxon>
    </lineage>
</organism>
<dbReference type="EC" id="6.1.1.11" evidence="1"/>
<dbReference type="EMBL" id="CP000030">
    <property type="protein sequence ID" value="AAV86703.1"/>
    <property type="status" value="ALT_INIT"/>
    <property type="molecule type" value="Genomic_DNA"/>
</dbReference>
<dbReference type="RefSeq" id="WP_011114419.1">
    <property type="nucleotide sequence ID" value="NC_004842.2"/>
</dbReference>
<dbReference type="SMR" id="Q5PAH7"/>
<dbReference type="KEGG" id="ama:AM759"/>
<dbReference type="HOGENOM" id="CLU_023797_1_1_5"/>
<dbReference type="UniPathway" id="UPA00906">
    <property type="reaction ID" value="UER00895"/>
</dbReference>
<dbReference type="GO" id="GO:0005737">
    <property type="term" value="C:cytoplasm"/>
    <property type="evidence" value="ECO:0007669"/>
    <property type="project" value="UniProtKB-SubCell"/>
</dbReference>
<dbReference type="GO" id="GO:0005524">
    <property type="term" value="F:ATP binding"/>
    <property type="evidence" value="ECO:0007669"/>
    <property type="project" value="UniProtKB-UniRule"/>
</dbReference>
<dbReference type="GO" id="GO:0004828">
    <property type="term" value="F:serine-tRNA ligase activity"/>
    <property type="evidence" value="ECO:0007669"/>
    <property type="project" value="UniProtKB-UniRule"/>
</dbReference>
<dbReference type="GO" id="GO:0016260">
    <property type="term" value="P:selenocysteine biosynthetic process"/>
    <property type="evidence" value="ECO:0007669"/>
    <property type="project" value="UniProtKB-UniRule"/>
</dbReference>
<dbReference type="GO" id="GO:0006434">
    <property type="term" value="P:seryl-tRNA aminoacylation"/>
    <property type="evidence" value="ECO:0007669"/>
    <property type="project" value="UniProtKB-UniRule"/>
</dbReference>
<dbReference type="CDD" id="cd00770">
    <property type="entry name" value="SerRS_core"/>
    <property type="match status" value="1"/>
</dbReference>
<dbReference type="Gene3D" id="3.30.930.10">
    <property type="entry name" value="Bira Bifunctional Protein, Domain 2"/>
    <property type="match status" value="1"/>
</dbReference>
<dbReference type="Gene3D" id="1.10.287.40">
    <property type="entry name" value="Serine-tRNA synthetase, tRNA binding domain"/>
    <property type="match status" value="1"/>
</dbReference>
<dbReference type="HAMAP" id="MF_00176">
    <property type="entry name" value="Ser_tRNA_synth_type1"/>
    <property type="match status" value="1"/>
</dbReference>
<dbReference type="InterPro" id="IPR002314">
    <property type="entry name" value="aa-tRNA-synt_IIb"/>
</dbReference>
<dbReference type="InterPro" id="IPR006195">
    <property type="entry name" value="aa-tRNA-synth_II"/>
</dbReference>
<dbReference type="InterPro" id="IPR045864">
    <property type="entry name" value="aa-tRNA-synth_II/BPL/LPL"/>
</dbReference>
<dbReference type="InterPro" id="IPR002317">
    <property type="entry name" value="Ser-tRNA-ligase_type_1"/>
</dbReference>
<dbReference type="InterPro" id="IPR015866">
    <property type="entry name" value="Ser-tRNA-synth_1_N"/>
</dbReference>
<dbReference type="InterPro" id="IPR042103">
    <property type="entry name" value="SerRS_1_N_sf"/>
</dbReference>
<dbReference type="InterPro" id="IPR033729">
    <property type="entry name" value="SerRS_core"/>
</dbReference>
<dbReference type="InterPro" id="IPR010978">
    <property type="entry name" value="tRNA-bd_arm"/>
</dbReference>
<dbReference type="NCBIfam" id="TIGR00414">
    <property type="entry name" value="serS"/>
    <property type="match status" value="1"/>
</dbReference>
<dbReference type="PANTHER" id="PTHR43697:SF1">
    <property type="entry name" value="SERINE--TRNA LIGASE"/>
    <property type="match status" value="1"/>
</dbReference>
<dbReference type="PANTHER" id="PTHR43697">
    <property type="entry name" value="SERYL-TRNA SYNTHETASE"/>
    <property type="match status" value="1"/>
</dbReference>
<dbReference type="Pfam" id="PF02403">
    <property type="entry name" value="Seryl_tRNA_N"/>
    <property type="match status" value="1"/>
</dbReference>
<dbReference type="Pfam" id="PF00587">
    <property type="entry name" value="tRNA-synt_2b"/>
    <property type="match status" value="1"/>
</dbReference>
<dbReference type="PIRSF" id="PIRSF001529">
    <property type="entry name" value="Ser-tRNA-synth_IIa"/>
    <property type="match status" value="1"/>
</dbReference>
<dbReference type="PRINTS" id="PR00981">
    <property type="entry name" value="TRNASYNTHSER"/>
</dbReference>
<dbReference type="SUPFAM" id="SSF55681">
    <property type="entry name" value="Class II aaRS and biotin synthetases"/>
    <property type="match status" value="1"/>
</dbReference>
<dbReference type="SUPFAM" id="SSF46589">
    <property type="entry name" value="tRNA-binding arm"/>
    <property type="match status" value="1"/>
</dbReference>
<dbReference type="PROSITE" id="PS50862">
    <property type="entry name" value="AA_TRNA_LIGASE_II"/>
    <property type="match status" value="1"/>
</dbReference>
<name>SYS_ANAMM</name>